<dbReference type="EMBL" id="CU329672">
    <property type="protein sequence ID" value="CAA21183.1"/>
    <property type="molecule type" value="Genomic_DNA"/>
</dbReference>
<dbReference type="PIR" id="T41414">
    <property type="entry name" value="T41414"/>
</dbReference>
<dbReference type="RefSeq" id="NP_588431.1">
    <property type="nucleotide sequence ID" value="NM_001023422.2"/>
</dbReference>
<dbReference type="SMR" id="O74888"/>
<dbReference type="FunCoup" id="O74888">
    <property type="interactions" value="139"/>
</dbReference>
<dbReference type="STRING" id="284812.O74888"/>
<dbReference type="PaxDb" id="4896-SPCC576.04.1"/>
<dbReference type="EnsemblFungi" id="SPCC576.04.1">
    <property type="protein sequence ID" value="SPCC576.04.1:pep"/>
    <property type="gene ID" value="SPCC576.04"/>
</dbReference>
<dbReference type="GeneID" id="2539556"/>
<dbReference type="KEGG" id="spo:2539556"/>
<dbReference type="PomBase" id="SPCC576.04">
    <property type="gene designation" value="bxi1"/>
</dbReference>
<dbReference type="VEuPathDB" id="FungiDB:SPCC576.04"/>
<dbReference type="eggNOG" id="KOG2322">
    <property type="taxonomic scope" value="Eukaryota"/>
</dbReference>
<dbReference type="HOGENOM" id="CLU_058671_0_0_1"/>
<dbReference type="InParanoid" id="O74888"/>
<dbReference type="OMA" id="FGVMSLY"/>
<dbReference type="PhylomeDB" id="O74888"/>
<dbReference type="PRO" id="PR:O74888"/>
<dbReference type="Proteomes" id="UP000002485">
    <property type="component" value="Chromosome III"/>
</dbReference>
<dbReference type="GO" id="GO:0005789">
    <property type="term" value="C:endoplasmic reticulum membrane"/>
    <property type="evidence" value="ECO:0000305"/>
    <property type="project" value="PomBase"/>
</dbReference>
<dbReference type="GO" id="GO:0000329">
    <property type="term" value="C:fungal-type vacuole membrane"/>
    <property type="evidence" value="ECO:0007005"/>
    <property type="project" value="PomBase"/>
</dbReference>
<dbReference type="GO" id="GO:0000139">
    <property type="term" value="C:Golgi membrane"/>
    <property type="evidence" value="ECO:0007669"/>
    <property type="project" value="UniProtKB-SubCell"/>
</dbReference>
<dbReference type="GO" id="GO:0016020">
    <property type="term" value="C:membrane"/>
    <property type="evidence" value="ECO:0000318"/>
    <property type="project" value="GO_Central"/>
</dbReference>
<dbReference type="GO" id="GO:0031966">
    <property type="term" value="C:mitochondrial membrane"/>
    <property type="evidence" value="ECO:0007669"/>
    <property type="project" value="UniProtKB-SubCell"/>
</dbReference>
<dbReference type="GO" id="GO:0005262">
    <property type="term" value="F:calcium channel activity"/>
    <property type="evidence" value="ECO:0000318"/>
    <property type="project" value="GO_Central"/>
</dbReference>
<dbReference type="GO" id="GO:0019722">
    <property type="term" value="P:calcium-mediated signaling"/>
    <property type="evidence" value="ECO:0000266"/>
    <property type="project" value="PomBase"/>
</dbReference>
<dbReference type="GO" id="GO:0030968">
    <property type="term" value="P:endoplasmic reticulum unfolded protein response"/>
    <property type="evidence" value="ECO:0000318"/>
    <property type="project" value="GO_Central"/>
</dbReference>
<dbReference type="CDD" id="cd10429">
    <property type="entry name" value="GAAP_like"/>
    <property type="match status" value="1"/>
</dbReference>
<dbReference type="InterPro" id="IPR006214">
    <property type="entry name" value="Bax_inhibitor_1-related"/>
</dbReference>
<dbReference type="PANTHER" id="PTHR23291">
    <property type="entry name" value="BAX INHIBITOR-RELATED"/>
    <property type="match status" value="1"/>
</dbReference>
<dbReference type="PANTHER" id="PTHR23291:SF50">
    <property type="entry name" value="PROTEIN LIFEGUARD 4"/>
    <property type="match status" value="1"/>
</dbReference>
<dbReference type="Pfam" id="PF01027">
    <property type="entry name" value="Bax1-I"/>
    <property type="match status" value="1"/>
</dbReference>
<feature type="chain" id="PRO_0000316210" description="Bax inhibitor 1">
    <location>
        <begin position="1"/>
        <end position="266"/>
    </location>
</feature>
<feature type="transmembrane region" description="Helical" evidence="2">
    <location>
        <begin position="70"/>
        <end position="90"/>
    </location>
</feature>
<feature type="transmembrane region" description="Helical" evidence="2">
    <location>
        <begin position="92"/>
        <end position="112"/>
    </location>
</feature>
<feature type="transmembrane region" description="Helical" evidence="2">
    <location>
        <begin position="123"/>
        <end position="143"/>
    </location>
</feature>
<feature type="transmembrane region" description="Helical" evidence="2">
    <location>
        <begin position="147"/>
        <end position="167"/>
    </location>
</feature>
<feature type="transmembrane region" description="Helical" evidence="2">
    <location>
        <begin position="177"/>
        <end position="197"/>
    </location>
</feature>
<feature type="transmembrane region" description="Helical" evidence="2">
    <location>
        <begin position="201"/>
        <end position="221"/>
    </location>
</feature>
<feature type="transmembrane region" description="Helical" evidence="2">
    <location>
        <begin position="240"/>
        <end position="260"/>
    </location>
</feature>
<feature type="region of interest" description="Disordered" evidence="3">
    <location>
        <begin position="1"/>
        <end position="22"/>
    </location>
</feature>
<keyword id="KW-0053">Apoptosis</keyword>
<keyword id="KW-0256">Endoplasmic reticulum</keyword>
<keyword id="KW-0333">Golgi apparatus</keyword>
<keyword id="KW-0472">Membrane</keyword>
<keyword id="KW-0496">Mitochondrion</keyword>
<keyword id="KW-1185">Reference proteome</keyword>
<keyword id="KW-0812">Transmembrane</keyword>
<keyword id="KW-1133">Transmembrane helix</keyword>
<keyword id="KW-0926">Vacuole</keyword>
<accession>O74888</accession>
<reference key="1">
    <citation type="journal article" date="2002" name="Nature">
        <title>The genome sequence of Schizosaccharomyces pombe.</title>
        <authorList>
            <person name="Wood V."/>
            <person name="Gwilliam R."/>
            <person name="Rajandream M.A."/>
            <person name="Lyne M.H."/>
            <person name="Lyne R."/>
            <person name="Stewart A."/>
            <person name="Sgouros J.G."/>
            <person name="Peat N."/>
            <person name="Hayles J."/>
            <person name="Baker S.G."/>
            <person name="Basham D."/>
            <person name="Bowman S."/>
            <person name="Brooks K."/>
            <person name="Brown D."/>
            <person name="Brown S."/>
            <person name="Chillingworth T."/>
            <person name="Churcher C.M."/>
            <person name="Collins M."/>
            <person name="Connor R."/>
            <person name="Cronin A."/>
            <person name="Davis P."/>
            <person name="Feltwell T."/>
            <person name="Fraser A."/>
            <person name="Gentles S."/>
            <person name="Goble A."/>
            <person name="Hamlin N."/>
            <person name="Harris D.E."/>
            <person name="Hidalgo J."/>
            <person name="Hodgson G."/>
            <person name="Holroyd S."/>
            <person name="Hornsby T."/>
            <person name="Howarth S."/>
            <person name="Huckle E.J."/>
            <person name="Hunt S."/>
            <person name="Jagels K."/>
            <person name="James K.D."/>
            <person name="Jones L."/>
            <person name="Jones M."/>
            <person name="Leather S."/>
            <person name="McDonald S."/>
            <person name="McLean J."/>
            <person name="Mooney P."/>
            <person name="Moule S."/>
            <person name="Mungall K.L."/>
            <person name="Murphy L.D."/>
            <person name="Niblett D."/>
            <person name="Odell C."/>
            <person name="Oliver K."/>
            <person name="O'Neil S."/>
            <person name="Pearson D."/>
            <person name="Quail M.A."/>
            <person name="Rabbinowitsch E."/>
            <person name="Rutherford K.M."/>
            <person name="Rutter S."/>
            <person name="Saunders D."/>
            <person name="Seeger K."/>
            <person name="Sharp S."/>
            <person name="Skelton J."/>
            <person name="Simmonds M.N."/>
            <person name="Squares R."/>
            <person name="Squares S."/>
            <person name="Stevens K."/>
            <person name="Taylor K."/>
            <person name="Taylor R.G."/>
            <person name="Tivey A."/>
            <person name="Walsh S.V."/>
            <person name="Warren T."/>
            <person name="Whitehead S."/>
            <person name="Woodward J.R."/>
            <person name="Volckaert G."/>
            <person name="Aert R."/>
            <person name="Robben J."/>
            <person name="Grymonprez B."/>
            <person name="Weltjens I."/>
            <person name="Vanstreels E."/>
            <person name="Rieger M."/>
            <person name="Schaefer M."/>
            <person name="Mueller-Auer S."/>
            <person name="Gabel C."/>
            <person name="Fuchs M."/>
            <person name="Duesterhoeft A."/>
            <person name="Fritzc C."/>
            <person name="Holzer E."/>
            <person name="Moestl D."/>
            <person name="Hilbert H."/>
            <person name="Borzym K."/>
            <person name="Langer I."/>
            <person name="Beck A."/>
            <person name="Lehrach H."/>
            <person name="Reinhardt R."/>
            <person name="Pohl T.M."/>
            <person name="Eger P."/>
            <person name="Zimmermann W."/>
            <person name="Wedler H."/>
            <person name="Wambutt R."/>
            <person name="Purnelle B."/>
            <person name="Goffeau A."/>
            <person name="Cadieu E."/>
            <person name="Dreano S."/>
            <person name="Gloux S."/>
            <person name="Lelaure V."/>
            <person name="Mottier S."/>
            <person name="Galibert F."/>
            <person name="Aves S.J."/>
            <person name="Xiang Z."/>
            <person name="Hunt C."/>
            <person name="Moore K."/>
            <person name="Hurst S.M."/>
            <person name="Lucas M."/>
            <person name="Rochet M."/>
            <person name="Gaillardin C."/>
            <person name="Tallada V.A."/>
            <person name="Garzon A."/>
            <person name="Thode G."/>
            <person name="Daga R.R."/>
            <person name="Cruzado L."/>
            <person name="Jimenez J."/>
            <person name="Sanchez M."/>
            <person name="del Rey F."/>
            <person name="Benito J."/>
            <person name="Dominguez A."/>
            <person name="Revuelta J.L."/>
            <person name="Moreno S."/>
            <person name="Armstrong J."/>
            <person name="Forsburg S.L."/>
            <person name="Cerutti L."/>
            <person name="Lowe T."/>
            <person name="McCombie W.R."/>
            <person name="Paulsen I."/>
            <person name="Potashkin J."/>
            <person name="Shpakovski G.V."/>
            <person name="Ussery D."/>
            <person name="Barrell B.G."/>
            <person name="Nurse P."/>
        </authorList>
    </citation>
    <scope>NUCLEOTIDE SEQUENCE [LARGE SCALE GENOMIC DNA]</scope>
    <source>
        <strain>972 / ATCC 24843</strain>
    </source>
</reference>
<reference key="2">
    <citation type="journal article" date="2006" name="Nat. Biotechnol.">
        <title>ORFeome cloning and global analysis of protein localization in the fission yeast Schizosaccharomyces pombe.</title>
        <authorList>
            <person name="Matsuyama A."/>
            <person name="Arai R."/>
            <person name="Yashiroda Y."/>
            <person name="Shirai A."/>
            <person name="Kamata A."/>
            <person name="Sekido S."/>
            <person name="Kobayashi Y."/>
            <person name="Hashimoto A."/>
            <person name="Hamamoto M."/>
            <person name="Hiraoka Y."/>
            <person name="Horinouchi S."/>
            <person name="Yoshida M."/>
        </authorList>
    </citation>
    <scope>SUBCELLULAR LOCATION [LARGE SCALE ANALYSIS]</scope>
</reference>
<protein>
    <recommendedName>
        <fullName>Bax inhibitor 1</fullName>
    </recommendedName>
    <alternativeName>
        <fullName>BH3 domain-containing protein bxi1</fullName>
    </alternativeName>
</protein>
<organism>
    <name type="scientific">Schizosaccharomyces pombe (strain 972 / ATCC 24843)</name>
    <name type="common">Fission yeast</name>
    <dbReference type="NCBI Taxonomy" id="284812"/>
    <lineage>
        <taxon>Eukaryota</taxon>
        <taxon>Fungi</taxon>
        <taxon>Dikarya</taxon>
        <taxon>Ascomycota</taxon>
        <taxon>Taphrinomycotina</taxon>
        <taxon>Schizosaccharomycetes</taxon>
        <taxon>Schizosaccharomycetales</taxon>
        <taxon>Schizosaccharomycetaceae</taxon>
        <taxon>Schizosaccharomyces</taxon>
    </lineage>
</organism>
<proteinExistence type="inferred from homology"/>
<comment type="function">
    <text evidence="1">Links the unfolded protein response and programmed cell death and mediates mitochondrial-dependent apoptosis. Induces cell death and disruption of the mitochondrial transmembrane potential (By similarity).</text>
</comment>
<comment type="subcellular location">
    <subcellularLocation>
        <location evidence="1">Endoplasmic reticulum membrane</location>
        <topology evidence="1">Multi-pass membrane protein</topology>
    </subcellularLocation>
    <subcellularLocation>
        <location evidence="1">Mitochondrion membrane</location>
        <topology evidence="1">Multi-pass membrane protein</topology>
    </subcellularLocation>
    <subcellularLocation>
        <location evidence="4">Golgi apparatus membrane</location>
        <topology evidence="4">Multi-pass membrane protein</topology>
    </subcellularLocation>
    <subcellularLocation>
        <location evidence="4">Vacuole membrane</location>
        <topology evidence="4">Multi-pass membrane protein</topology>
    </subcellularLocation>
</comment>
<comment type="similarity">
    <text evidence="5">Belongs to the BI1 family. LFG subfamily.</text>
</comment>
<sequence length="266" mass="30402">MPANYQSVPQDDPSVPNLAQAPPAYSEYNESATENPAVDQFKNTTPVAECAKSIRMAFLRKVYAILTAQLFVTSLFGGIFYLHPAFSFWVQMHPWFLILNFFISLVVLFGLIMKPYSYPRNYIFLFLFTALEGLTLGTAITFFSARIILEAVFITLGVFVALTAFTFQSKWDFSRLGGFLYVSLWSLILTPLIFFFVPSTPFIDMAFAGFGTLVFCGYILFDTYNILHRYSPEEFIMSSLMLYLDFINLFIRILQILGMLQNNDNN</sequence>
<name>BXI1_SCHPO</name>
<evidence type="ECO:0000250" key="1"/>
<evidence type="ECO:0000255" key="2"/>
<evidence type="ECO:0000256" key="3">
    <source>
        <dbReference type="SAM" id="MobiDB-lite"/>
    </source>
</evidence>
<evidence type="ECO:0000269" key="4">
    <source>
    </source>
</evidence>
<evidence type="ECO:0000305" key="5"/>
<gene>
    <name type="primary">bxi1</name>
    <name type="synonym">ybh3</name>
    <name type="ORF">SPCC576.04</name>
</gene>